<feature type="chain" id="PRO_1000128387" description="Small ribosomal subunit protein uS14">
    <location>
        <begin position="1"/>
        <end position="101"/>
    </location>
</feature>
<name>RS14_ECOHS</name>
<protein>
    <recommendedName>
        <fullName evidence="1">Small ribosomal subunit protein uS14</fullName>
    </recommendedName>
    <alternativeName>
        <fullName evidence="2">30S ribosomal protein S14</fullName>
    </alternativeName>
</protein>
<comment type="function">
    <text evidence="1">Binds 16S rRNA, required for the assembly of 30S particles and may also be responsible for determining the conformation of the 16S rRNA at the A site.</text>
</comment>
<comment type="subunit">
    <text evidence="1">Part of the 30S ribosomal subunit. Contacts proteins S3 and S10.</text>
</comment>
<comment type="similarity">
    <text evidence="1">Belongs to the universal ribosomal protein uS14 family.</text>
</comment>
<sequence length="101" mass="11580">MAKQSMKAREVKRVALADKYFAKRAELKAIISDVNASDEDRWNAVLKLQTLPRDSSPSRQRNRCRQTGRPHGFLRKFGLSRIKVREAAMRGEIPGLKKASW</sequence>
<evidence type="ECO:0000255" key="1">
    <source>
        <dbReference type="HAMAP-Rule" id="MF_00537"/>
    </source>
</evidence>
<evidence type="ECO:0000305" key="2"/>
<organism>
    <name type="scientific">Escherichia coli O9:H4 (strain HS)</name>
    <dbReference type="NCBI Taxonomy" id="331112"/>
    <lineage>
        <taxon>Bacteria</taxon>
        <taxon>Pseudomonadati</taxon>
        <taxon>Pseudomonadota</taxon>
        <taxon>Gammaproteobacteria</taxon>
        <taxon>Enterobacterales</taxon>
        <taxon>Enterobacteriaceae</taxon>
        <taxon>Escherichia</taxon>
    </lineage>
</organism>
<reference key="1">
    <citation type="journal article" date="2008" name="J. Bacteriol.">
        <title>The pangenome structure of Escherichia coli: comparative genomic analysis of E. coli commensal and pathogenic isolates.</title>
        <authorList>
            <person name="Rasko D.A."/>
            <person name="Rosovitz M.J."/>
            <person name="Myers G.S.A."/>
            <person name="Mongodin E.F."/>
            <person name="Fricke W.F."/>
            <person name="Gajer P."/>
            <person name="Crabtree J."/>
            <person name="Sebaihia M."/>
            <person name="Thomson N.R."/>
            <person name="Chaudhuri R."/>
            <person name="Henderson I.R."/>
            <person name="Sperandio V."/>
            <person name="Ravel J."/>
        </authorList>
    </citation>
    <scope>NUCLEOTIDE SEQUENCE [LARGE SCALE GENOMIC DNA]</scope>
    <source>
        <strain>HS</strain>
    </source>
</reference>
<proteinExistence type="inferred from homology"/>
<gene>
    <name evidence="1" type="primary">rpsN</name>
    <name type="ordered locus">EcHS_A3501</name>
</gene>
<dbReference type="EMBL" id="CP000802">
    <property type="protein sequence ID" value="ABV07716.1"/>
    <property type="molecule type" value="Genomic_DNA"/>
</dbReference>
<dbReference type="RefSeq" id="WP_001118930.1">
    <property type="nucleotide sequence ID" value="NC_009800.1"/>
</dbReference>
<dbReference type="SMR" id="A8A5B2"/>
<dbReference type="GeneID" id="93778680"/>
<dbReference type="KEGG" id="ecx:EcHS_A3501"/>
<dbReference type="HOGENOM" id="CLU_139869_0_1_6"/>
<dbReference type="GO" id="GO:0005737">
    <property type="term" value="C:cytoplasm"/>
    <property type="evidence" value="ECO:0007669"/>
    <property type="project" value="UniProtKB-ARBA"/>
</dbReference>
<dbReference type="GO" id="GO:0015935">
    <property type="term" value="C:small ribosomal subunit"/>
    <property type="evidence" value="ECO:0007669"/>
    <property type="project" value="TreeGrafter"/>
</dbReference>
<dbReference type="GO" id="GO:0019843">
    <property type="term" value="F:rRNA binding"/>
    <property type="evidence" value="ECO:0007669"/>
    <property type="project" value="UniProtKB-UniRule"/>
</dbReference>
<dbReference type="GO" id="GO:0003735">
    <property type="term" value="F:structural constituent of ribosome"/>
    <property type="evidence" value="ECO:0007669"/>
    <property type="project" value="InterPro"/>
</dbReference>
<dbReference type="GO" id="GO:0006412">
    <property type="term" value="P:translation"/>
    <property type="evidence" value="ECO:0007669"/>
    <property type="project" value="UniProtKB-UniRule"/>
</dbReference>
<dbReference type="FunFam" id="1.10.287.1480:FF:000001">
    <property type="entry name" value="30S ribosomal protein S14"/>
    <property type="match status" value="1"/>
</dbReference>
<dbReference type="Gene3D" id="1.10.287.1480">
    <property type="match status" value="1"/>
</dbReference>
<dbReference type="HAMAP" id="MF_00537">
    <property type="entry name" value="Ribosomal_uS14_1"/>
    <property type="match status" value="1"/>
</dbReference>
<dbReference type="InterPro" id="IPR001209">
    <property type="entry name" value="Ribosomal_uS14"/>
</dbReference>
<dbReference type="InterPro" id="IPR023036">
    <property type="entry name" value="Ribosomal_uS14_bac/plastid"/>
</dbReference>
<dbReference type="InterPro" id="IPR018271">
    <property type="entry name" value="Ribosomal_uS14_CS"/>
</dbReference>
<dbReference type="NCBIfam" id="NF006477">
    <property type="entry name" value="PRK08881.1"/>
    <property type="match status" value="1"/>
</dbReference>
<dbReference type="PANTHER" id="PTHR19836">
    <property type="entry name" value="30S RIBOSOMAL PROTEIN S14"/>
    <property type="match status" value="1"/>
</dbReference>
<dbReference type="PANTHER" id="PTHR19836:SF19">
    <property type="entry name" value="SMALL RIBOSOMAL SUBUNIT PROTEIN US14M"/>
    <property type="match status" value="1"/>
</dbReference>
<dbReference type="Pfam" id="PF00253">
    <property type="entry name" value="Ribosomal_S14"/>
    <property type="match status" value="1"/>
</dbReference>
<dbReference type="SUPFAM" id="SSF57716">
    <property type="entry name" value="Glucocorticoid receptor-like (DNA-binding domain)"/>
    <property type="match status" value="1"/>
</dbReference>
<dbReference type="PROSITE" id="PS00527">
    <property type="entry name" value="RIBOSOMAL_S14"/>
    <property type="match status" value="1"/>
</dbReference>
<keyword id="KW-0687">Ribonucleoprotein</keyword>
<keyword id="KW-0689">Ribosomal protein</keyword>
<keyword id="KW-0694">RNA-binding</keyword>
<keyword id="KW-0699">rRNA-binding</keyword>
<accession>A8A5B2</accession>